<organism>
    <name type="scientific">Sulfolobus acidocaldarius (strain ATCC 33909 / DSM 639 / JCM 8929 / NBRC 15157 / NCIMB 11770)</name>
    <dbReference type="NCBI Taxonomy" id="330779"/>
    <lineage>
        <taxon>Archaea</taxon>
        <taxon>Thermoproteota</taxon>
        <taxon>Thermoprotei</taxon>
        <taxon>Sulfolobales</taxon>
        <taxon>Sulfolobaceae</taxon>
        <taxon>Sulfolobus</taxon>
    </lineage>
</organism>
<gene>
    <name type="ordered locus">Saci_0865</name>
</gene>
<comment type="similarity">
    <text evidence="1">Belongs to the SUI1 family.</text>
</comment>
<evidence type="ECO:0000255" key="1">
    <source>
        <dbReference type="HAMAP-Rule" id="MF_00604"/>
    </source>
</evidence>
<keyword id="KW-0648">Protein biosynthesis</keyword>
<keyword id="KW-1185">Reference proteome</keyword>
<keyword id="KW-0810">Translation regulation</keyword>
<accession>Q4JAE7</accession>
<feature type="chain" id="PRO_0000130592" description="Protein translation factor SUI1 homolog">
    <location>
        <begin position="1"/>
        <end position="99"/>
    </location>
</feature>
<proteinExistence type="inferred from homology"/>
<name>SUI1_SULAC</name>
<reference key="1">
    <citation type="journal article" date="2005" name="J. Bacteriol.">
        <title>The genome of Sulfolobus acidocaldarius, a model organism of the Crenarchaeota.</title>
        <authorList>
            <person name="Chen L."/>
            <person name="Bruegger K."/>
            <person name="Skovgaard M."/>
            <person name="Redder P."/>
            <person name="She Q."/>
            <person name="Torarinsson E."/>
            <person name="Greve B."/>
            <person name="Awayez M."/>
            <person name="Zibat A."/>
            <person name="Klenk H.-P."/>
            <person name="Garrett R.A."/>
        </authorList>
    </citation>
    <scope>NUCLEOTIDE SEQUENCE [LARGE SCALE GENOMIC DNA]</scope>
    <source>
        <strain>ATCC 33909 / DSM 639 / JCM 8929 / NBRC 15157 / NCIMB 11770</strain>
    </source>
</reference>
<dbReference type="EMBL" id="CP000077">
    <property type="protein sequence ID" value="AAY80232.1"/>
    <property type="molecule type" value="Genomic_DNA"/>
</dbReference>
<dbReference type="RefSeq" id="WP_011277734.1">
    <property type="nucleotide sequence ID" value="NC_007181.1"/>
</dbReference>
<dbReference type="SMR" id="Q4JAE7"/>
<dbReference type="STRING" id="330779.Saci_0865"/>
<dbReference type="GeneID" id="14551378"/>
<dbReference type="KEGG" id="sai:Saci_0865"/>
<dbReference type="PATRIC" id="fig|330779.12.peg.828"/>
<dbReference type="eggNOG" id="arCOG04223">
    <property type="taxonomic scope" value="Archaea"/>
</dbReference>
<dbReference type="HOGENOM" id="CLU_082805_6_1_2"/>
<dbReference type="Proteomes" id="UP000001018">
    <property type="component" value="Chromosome"/>
</dbReference>
<dbReference type="GO" id="GO:0003729">
    <property type="term" value="F:mRNA binding"/>
    <property type="evidence" value="ECO:0007669"/>
    <property type="project" value="TreeGrafter"/>
</dbReference>
<dbReference type="GO" id="GO:0003743">
    <property type="term" value="F:translation initiation factor activity"/>
    <property type="evidence" value="ECO:0007669"/>
    <property type="project" value="InterPro"/>
</dbReference>
<dbReference type="GO" id="GO:0001731">
    <property type="term" value="P:formation of translation preinitiation complex"/>
    <property type="evidence" value="ECO:0007669"/>
    <property type="project" value="TreeGrafter"/>
</dbReference>
<dbReference type="GO" id="GO:0006417">
    <property type="term" value="P:regulation of translation"/>
    <property type="evidence" value="ECO:0007669"/>
    <property type="project" value="UniProtKB-UniRule"/>
</dbReference>
<dbReference type="GO" id="GO:0002188">
    <property type="term" value="P:translation reinitiation"/>
    <property type="evidence" value="ECO:0007669"/>
    <property type="project" value="TreeGrafter"/>
</dbReference>
<dbReference type="CDD" id="cd11567">
    <property type="entry name" value="YciH_like"/>
    <property type="match status" value="1"/>
</dbReference>
<dbReference type="Gene3D" id="3.30.780.10">
    <property type="entry name" value="SUI1-like domain"/>
    <property type="match status" value="1"/>
</dbReference>
<dbReference type="HAMAP" id="MF_00604">
    <property type="entry name" value="SUI1"/>
    <property type="match status" value="1"/>
</dbReference>
<dbReference type="InterPro" id="IPR050318">
    <property type="entry name" value="DENR/SUI1_TIF"/>
</dbReference>
<dbReference type="InterPro" id="IPR001950">
    <property type="entry name" value="SUI1"/>
</dbReference>
<dbReference type="InterPro" id="IPR022851">
    <property type="entry name" value="SUI1_arc"/>
</dbReference>
<dbReference type="InterPro" id="IPR005872">
    <property type="entry name" value="SUI1_arc_bac"/>
</dbReference>
<dbReference type="InterPro" id="IPR036877">
    <property type="entry name" value="SUI1_dom_sf"/>
</dbReference>
<dbReference type="NCBIfam" id="NF002096">
    <property type="entry name" value="PRK00939.1"/>
    <property type="match status" value="1"/>
</dbReference>
<dbReference type="NCBIfam" id="TIGR01158">
    <property type="entry name" value="SUI1_rel"/>
    <property type="match status" value="1"/>
</dbReference>
<dbReference type="PANTHER" id="PTHR12789:SF0">
    <property type="entry name" value="DENSITY-REGULATED PROTEIN"/>
    <property type="match status" value="1"/>
</dbReference>
<dbReference type="PANTHER" id="PTHR12789">
    <property type="entry name" value="DENSITY-REGULATED PROTEIN HOMOLOG"/>
    <property type="match status" value="1"/>
</dbReference>
<dbReference type="Pfam" id="PF01253">
    <property type="entry name" value="SUI1"/>
    <property type="match status" value="1"/>
</dbReference>
<dbReference type="PIRSF" id="PIRSF037511">
    <property type="entry name" value="Transl_init_SUI1_pro"/>
    <property type="match status" value="1"/>
</dbReference>
<dbReference type="SUPFAM" id="SSF55159">
    <property type="entry name" value="eIF1-like"/>
    <property type="match status" value="1"/>
</dbReference>
<dbReference type="PROSITE" id="PS50296">
    <property type="entry name" value="SUI1"/>
    <property type="match status" value="1"/>
</dbReference>
<protein>
    <recommendedName>
        <fullName evidence="1">Protein translation factor SUI1 homolog</fullName>
    </recommendedName>
</protein>
<sequence length="99" mass="11069">MSDLCGGLPPDICEQLTKEEQFIKIKVEKRRYGKEVTIVEGISNDETELKKIASELKSKLAAGGTVKNGKIELQGDHRDRVKELLIKMGFPESNILVIE</sequence>